<comment type="function">
    <text evidence="1">Essential for the assembly of ubiquinol-cytochrome c reductase. It has a direct effect on the correct occurrence of the Rieske protein, core 4, core 5 and apocytochrome b (By similarity).</text>
</comment>
<comment type="subcellular location">
    <subcellularLocation>
        <location evidence="1">Mitochondrion inner membrane</location>
        <topology evidence="1">Single-pass membrane protein</topology>
    </subcellularLocation>
</comment>
<comment type="similarity">
    <text evidence="4">Belongs to the CBP4 family.</text>
</comment>
<proteinExistence type="inferred from homology"/>
<dbReference type="EMBL" id="CH476626">
    <property type="protein sequence ID" value="EDO02961.1"/>
    <property type="molecule type" value="Genomic_DNA"/>
</dbReference>
<dbReference type="RefSeq" id="XP_001594010.1">
    <property type="nucleotide sequence ID" value="XM_001593960.1"/>
</dbReference>
<dbReference type="SMR" id="A7EJE5"/>
<dbReference type="FunCoup" id="A7EJE5">
    <property type="interactions" value="37"/>
</dbReference>
<dbReference type="EnsemblFungi" id="EDO02961">
    <property type="protein sequence ID" value="EDO02961"/>
    <property type="gene ID" value="SS1G_05438"/>
</dbReference>
<dbReference type="GeneID" id="5489962"/>
<dbReference type="KEGG" id="ssl:SS1G_05438"/>
<dbReference type="VEuPathDB" id="FungiDB:sscle_08g066740"/>
<dbReference type="eggNOG" id="ENOG502S2G8">
    <property type="taxonomic scope" value="Eukaryota"/>
</dbReference>
<dbReference type="HOGENOM" id="CLU_136894_0_0_1"/>
<dbReference type="InParanoid" id="A7EJE5"/>
<dbReference type="OMA" id="DKPIWVV"/>
<dbReference type="OrthoDB" id="5576752at2759"/>
<dbReference type="Proteomes" id="UP000001312">
    <property type="component" value="Unassembled WGS sequence"/>
</dbReference>
<dbReference type="GO" id="GO:0005743">
    <property type="term" value="C:mitochondrial inner membrane"/>
    <property type="evidence" value="ECO:0007669"/>
    <property type="project" value="UniProtKB-SubCell"/>
</dbReference>
<dbReference type="GO" id="GO:0031966">
    <property type="term" value="C:mitochondrial membrane"/>
    <property type="evidence" value="ECO:0000318"/>
    <property type="project" value="GO_Central"/>
</dbReference>
<dbReference type="GO" id="GO:0034551">
    <property type="term" value="P:mitochondrial respiratory chain complex III assembly"/>
    <property type="evidence" value="ECO:0000318"/>
    <property type="project" value="GO_Central"/>
</dbReference>
<dbReference type="InterPro" id="IPR012420">
    <property type="entry name" value="Cbp4"/>
</dbReference>
<dbReference type="PANTHER" id="PTHR28202">
    <property type="entry name" value="ASSEMBLY FACTOR CBP4"/>
    <property type="match status" value="1"/>
</dbReference>
<dbReference type="PANTHER" id="PTHR28202:SF1">
    <property type="entry name" value="ASSEMBLY FACTOR CBP4"/>
    <property type="match status" value="1"/>
</dbReference>
<dbReference type="Pfam" id="PF07960">
    <property type="entry name" value="CBP4"/>
    <property type="match status" value="1"/>
</dbReference>
<sequence length="125" mass="14415">MPPKPINWRMYSKMAVAGITCCVGGPALIYYISPTEEELFLKYNPELQKRSLENRVGKQEDFDNFVARLKEYSKSDRPIWVEAEEAARKNRSGKIEEQAKLMQEMQQRKEEIKKSGTKLMPGGSL</sequence>
<evidence type="ECO:0000250" key="1"/>
<evidence type="ECO:0000255" key="2"/>
<evidence type="ECO:0000256" key="3">
    <source>
        <dbReference type="SAM" id="MobiDB-lite"/>
    </source>
</evidence>
<evidence type="ECO:0000305" key="4"/>
<accession>A7EJE5</accession>
<reference key="1">
    <citation type="journal article" date="2011" name="PLoS Genet.">
        <title>Genomic analysis of the necrotrophic fungal pathogens Sclerotinia sclerotiorum and Botrytis cinerea.</title>
        <authorList>
            <person name="Amselem J."/>
            <person name="Cuomo C.A."/>
            <person name="van Kan J.A.L."/>
            <person name="Viaud M."/>
            <person name="Benito E.P."/>
            <person name="Couloux A."/>
            <person name="Coutinho P.M."/>
            <person name="de Vries R.P."/>
            <person name="Dyer P.S."/>
            <person name="Fillinger S."/>
            <person name="Fournier E."/>
            <person name="Gout L."/>
            <person name="Hahn M."/>
            <person name="Kohn L."/>
            <person name="Lapalu N."/>
            <person name="Plummer K.M."/>
            <person name="Pradier J.-M."/>
            <person name="Quevillon E."/>
            <person name="Sharon A."/>
            <person name="Simon A."/>
            <person name="ten Have A."/>
            <person name="Tudzynski B."/>
            <person name="Tudzynski P."/>
            <person name="Wincker P."/>
            <person name="Andrew M."/>
            <person name="Anthouard V."/>
            <person name="Beever R.E."/>
            <person name="Beffa R."/>
            <person name="Benoit I."/>
            <person name="Bouzid O."/>
            <person name="Brault B."/>
            <person name="Chen Z."/>
            <person name="Choquer M."/>
            <person name="Collemare J."/>
            <person name="Cotton P."/>
            <person name="Danchin E.G."/>
            <person name="Da Silva C."/>
            <person name="Gautier A."/>
            <person name="Giraud C."/>
            <person name="Giraud T."/>
            <person name="Gonzalez C."/>
            <person name="Grossetete S."/>
            <person name="Gueldener U."/>
            <person name="Henrissat B."/>
            <person name="Howlett B.J."/>
            <person name="Kodira C."/>
            <person name="Kretschmer M."/>
            <person name="Lappartient A."/>
            <person name="Leroch M."/>
            <person name="Levis C."/>
            <person name="Mauceli E."/>
            <person name="Neuveglise C."/>
            <person name="Oeser B."/>
            <person name="Pearson M."/>
            <person name="Poulain J."/>
            <person name="Poussereau N."/>
            <person name="Quesneville H."/>
            <person name="Rascle C."/>
            <person name="Schumacher J."/>
            <person name="Segurens B."/>
            <person name="Sexton A."/>
            <person name="Silva E."/>
            <person name="Sirven C."/>
            <person name="Soanes D.M."/>
            <person name="Talbot N.J."/>
            <person name="Templeton M."/>
            <person name="Yandava C."/>
            <person name="Yarden O."/>
            <person name="Zeng Q."/>
            <person name="Rollins J.A."/>
            <person name="Lebrun M.-H."/>
            <person name="Dickman M."/>
        </authorList>
    </citation>
    <scope>NUCLEOTIDE SEQUENCE [LARGE SCALE GENOMIC DNA]</scope>
    <source>
        <strain>ATCC 18683 / 1980 / Ss-1</strain>
    </source>
</reference>
<name>CBP4_SCLS1</name>
<organism>
    <name type="scientific">Sclerotinia sclerotiorum (strain ATCC 18683 / 1980 / Ss-1)</name>
    <name type="common">White mold</name>
    <name type="synonym">Whetzelinia sclerotiorum</name>
    <dbReference type="NCBI Taxonomy" id="665079"/>
    <lineage>
        <taxon>Eukaryota</taxon>
        <taxon>Fungi</taxon>
        <taxon>Dikarya</taxon>
        <taxon>Ascomycota</taxon>
        <taxon>Pezizomycotina</taxon>
        <taxon>Leotiomycetes</taxon>
        <taxon>Helotiales</taxon>
        <taxon>Sclerotiniaceae</taxon>
        <taxon>Sclerotinia</taxon>
    </lineage>
</organism>
<keyword id="KW-0143">Chaperone</keyword>
<keyword id="KW-0175">Coiled coil</keyword>
<keyword id="KW-0472">Membrane</keyword>
<keyword id="KW-0496">Mitochondrion</keyword>
<keyword id="KW-0999">Mitochondrion inner membrane</keyword>
<keyword id="KW-1185">Reference proteome</keyword>
<keyword id="KW-0812">Transmembrane</keyword>
<keyword id="KW-1133">Transmembrane helix</keyword>
<gene>
    <name type="primary">cbp4</name>
    <name type="ORF">SS1G_05438</name>
</gene>
<protein>
    <recommendedName>
        <fullName>Assembly factor cbp4</fullName>
    </recommendedName>
    <alternativeName>
        <fullName>Cytochrome b mRNA-processing protein 4</fullName>
    </alternativeName>
</protein>
<feature type="chain" id="PRO_0000330138" description="Assembly factor cbp4">
    <location>
        <begin position="1"/>
        <end position="125"/>
    </location>
</feature>
<feature type="transmembrane region" description="Helical" evidence="2">
    <location>
        <begin position="15"/>
        <end position="34"/>
    </location>
</feature>
<feature type="region of interest" description="Disordered" evidence="3">
    <location>
        <begin position="103"/>
        <end position="125"/>
    </location>
</feature>
<feature type="coiled-coil region" evidence="2">
    <location>
        <begin position="92"/>
        <end position="119"/>
    </location>
</feature>